<accession>B4RCV1</accession>
<protein>
    <recommendedName>
        <fullName evidence="1">Orotate phosphoribosyltransferase</fullName>
        <shortName evidence="1">OPRT</shortName>
        <shortName evidence="1">OPRTase</shortName>
        <ecNumber evidence="1">2.4.2.10</ecNumber>
    </recommendedName>
</protein>
<organism>
    <name type="scientific">Phenylobacterium zucineum (strain HLK1)</name>
    <dbReference type="NCBI Taxonomy" id="450851"/>
    <lineage>
        <taxon>Bacteria</taxon>
        <taxon>Pseudomonadati</taxon>
        <taxon>Pseudomonadota</taxon>
        <taxon>Alphaproteobacteria</taxon>
        <taxon>Caulobacterales</taxon>
        <taxon>Caulobacteraceae</taxon>
        <taxon>Phenylobacterium</taxon>
    </lineage>
</organism>
<dbReference type="EC" id="2.4.2.10" evidence="1"/>
<dbReference type="EMBL" id="CP000747">
    <property type="protein sequence ID" value="ACG78288.1"/>
    <property type="molecule type" value="Genomic_DNA"/>
</dbReference>
<dbReference type="RefSeq" id="WP_012522430.1">
    <property type="nucleotide sequence ID" value="NC_011144.1"/>
</dbReference>
<dbReference type="SMR" id="B4RCV1"/>
<dbReference type="STRING" id="450851.PHZ_c1877"/>
<dbReference type="KEGG" id="pzu:PHZ_c1877"/>
<dbReference type="eggNOG" id="COG0461">
    <property type="taxonomic scope" value="Bacteria"/>
</dbReference>
<dbReference type="HOGENOM" id="CLU_074878_3_0_5"/>
<dbReference type="OrthoDB" id="9783570at2"/>
<dbReference type="UniPathway" id="UPA00070">
    <property type="reaction ID" value="UER00119"/>
</dbReference>
<dbReference type="Proteomes" id="UP000001868">
    <property type="component" value="Chromosome"/>
</dbReference>
<dbReference type="GO" id="GO:0000287">
    <property type="term" value="F:magnesium ion binding"/>
    <property type="evidence" value="ECO:0007669"/>
    <property type="project" value="UniProtKB-UniRule"/>
</dbReference>
<dbReference type="GO" id="GO:0004588">
    <property type="term" value="F:orotate phosphoribosyltransferase activity"/>
    <property type="evidence" value="ECO:0007669"/>
    <property type="project" value="UniProtKB-UniRule"/>
</dbReference>
<dbReference type="GO" id="GO:0044205">
    <property type="term" value="P:'de novo' UMP biosynthetic process"/>
    <property type="evidence" value="ECO:0007669"/>
    <property type="project" value="UniProtKB-UniRule"/>
</dbReference>
<dbReference type="GO" id="GO:0019856">
    <property type="term" value="P:pyrimidine nucleobase biosynthetic process"/>
    <property type="evidence" value="ECO:0007669"/>
    <property type="project" value="InterPro"/>
</dbReference>
<dbReference type="CDD" id="cd06223">
    <property type="entry name" value="PRTases_typeI"/>
    <property type="match status" value="1"/>
</dbReference>
<dbReference type="Gene3D" id="3.40.50.2020">
    <property type="match status" value="1"/>
</dbReference>
<dbReference type="HAMAP" id="MF_01208">
    <property type="entry name" value="PyrE"/>
    <property type="match status" value="1"/>
</dbReference>
<dbReference type="InterPro" id="IPR023031">
    <property type="entry name" value="OPRT"/>
</dbReference>
<dbReference type="InterPro" id="IPR006273">
    <property type="entry name" value="Orotate_PRibTrfase_bac"/>
</dbReference>
<dbReference type="InterPro" id="IPR000836">
    <property type="entry name" value="PRibTrfase_dom"/>
</dbReference>
<dbReference type="InterPro" id="IPR029057">
    <property type="entry name" value="PRTase-like"/>
</dbReference>
<dbReference type="NCBIfam" id="TIGR01367">
    <property type="entry name" value="pyrE_Therm"/>
    <property type="match status" value="1"/>
</dbReference>
<dbReference type="PANTHER" id="PTHR19278">
    <property type="entry name" value="OROTATE PHOSPHORIBOSYLTRANSFERASE"/>
    <property type="match status" value="1"/>
</dbReference>
<dbReference type="PANTHER" id="PTHR19278:SF9">
    <property type="entry name" value="URIDINE 5'-MONOPHOSPHATE SYNTHASE"/>
    <property type="match status" value="1"/>
</dbReference>
<dbReference type="Pfam" id="PF00156">
    <property type="entry name" value="Pribosyltran"/>
    <property type="match status" value="1"/>
</dbReference>
<dbReference type="SUPFAM" id="SSF53271">
    <property type="entry name" value="PRTase-like"/>
    <property type="match status" value="1"/>
</dbReference>
<evidence type="ECO:0000255" key="1">
    <source>
        <dbReference type="HAMAP-Rule" id="MF_01208"/>
    </source>
</evidence>
<name>PYRE_PHEZH</name>
<keyword id="KW-0328">Glycosyltransferase</keyword>
<keyword id="KW-0460">Magnesium</keyword>
<keyword id="KW-0665">Pyrimidine biosynthesis</keyword>
<keyword id="KW-1185">Reference proteome</keyword>
<keyword id="KW-0808">Transferase</keyword>
<reference key="1">
    <citation type="journal article" date="2008" name="BMC Genomics">
        <title>Complete genome of Phenylobacterium zucineum - a novel facultative intracellular bacterium isolated from human erythroleukemia cell line K562.</title>
        <authorList>
            <person name="Luo Y."/>
            <person name="Xu X."/>
            <person name="Ding Z."/>
            <person name="Liu Z."/>
            <person name="Zhang B."/>
            <person name="Yan Z."/>
            <person name="Sun J."/>
            <person name="Hu S."/>
            <person name="Hu X."/>
        </authorList>
    </citation>
    <scope>NUCLEOTIDE SEQUENCE [LARGE SCALE GENOMIC DNA]</scope>
    <source>
        <strain>HLK1</strain>
    </source>
</reference>
<sequence>MNTEDVLNEFRGAGALREGHFVLSSGLHSPVFLQKNLVFQYPDRTERLCKALAAKITEAVGPVDLCVSPAVGGIIPGYETARHLGCPSVYVEREGGEFKLRRAFSIPEGARIAMVEDIVTTGLSSRECVEAIRKAGGNVVVAACIVDRSGGRADPGAPLVALARLDVPAYPADQLPPELAAIPIEDPGSRRLKG</sequence>
<feature type="chain" id="PRO_1000138811" description="Orotate phosphoribosyltransferase">
    <location>
        <begin position="1"/>
        <end position="194"/>
    </location>
</feature>
<feature type="binding site" evidence="1">
    <location>
        <begin position="116"/>
        <end position="124"/>
    </location>
    <ligand>
        <name>5-phospho-alpha-D-ribose 1-diphosphate</name>
        <dbReference type="ChEBI" id="CHEBI:58017"/>
    </ligand>
</feature>
<feature type="binding site" evidence="1">
    <location>
        <position position="120"/>
    </location>
    <ligand>
        <name>orotate</name>
        <dbReference type="ChEBI" id="CHEBI:30839"/>
    </ligand>
</feature>
<feature type="binding site" evidence="1">
    <location>
        <position position="148"/>
    </location>
    <ligand>
        <name>orotate</name>
        <dbReference type="ChEBI" id="CHEBI:30839"/>
    </ligand>
</feature>
<gene>
    <name evidence="1" type="primary">pyrE</name>
    <name type="ordered locus">PHZ_c1877</name>
</gene>
<proteinExistence type="inferred from homology"/>
<comment type="function">
    <text evidence="1">Catalyzes the transfer of a ribosyl phosphate group from 5-phosphoribose 1-diphosphate to orotate, leading to the formation of orotidine monophosphate (OMP).</text>
</comment>
<comment type="catalytic activity">
    <reaction evidence="1">
        <text>orotidine 5'-phosphate + diphosphate = orotate + 5-phospho-alpha-D-ribose 1-diphosphate</text>
        <dbReference type="Rhea" id="RHEA:10380"/>
        <dbReference type="ChEBI" id="CHEBI:30839"/>
        <dbReference type="ChEBI" id="CHEBI:33019"/>
        <dbReference type="ChEBI" id="CHEBI:57538"/>
        <dbReference type="ChEBI" id="CHEBI:58017"/>
        <dbReference type="EC" id="2.4.2.10"/>
    </reaction>
</comment>
<comment type="cofactor">
    <cofactor evidence="1">
        <name>Mg(2+)</name>
        <dbReference type="ChEBI" id="CHEBI:18420"/>
    </cofactor>
</comment>
<comment type="pathway">
    <text evidence="1">Pyrimidine metabolism; UMP biosynthesis via de novo pathway; UMP from orotate: step 1/2.</text>
</comment>
<comment type="subunit">
    <text evidence="1">Homodimer.</text>
</comment>
<comment type="similarity">
    <text evidence="1">Belongs to the purine/pyrimidine phosphoribosyltransferase family. PyrE subfamily.</text>
</comment>